<comment type="similarity">
    <text evidence="1">Belongs to the UPF0246 family.</text>
</comment>
<feature type="chain" id="PRO_0000262055" description="UPF0246 protein YaaA">
    <location>
        <begin position="1"/>
        <end position="257"/>
    </location>
</feature>
<protein>
    <recommendedName>
        <fullName evidence="1">UPF0246 protein YaaA</fullName>
    </recommendedName>
</protein>
<reference key="1">
    <citation type="journal article" date="2004" name="Nat. Genet.">
        <title>Comparison of genome degradation in Paratyphi A and Typhi, human-restricted serovars of Salmonella enterica that cause typhoid.</title>
        <authorList>
            <person name="McClelland M."/>
            <person name="Sanderson K.E."/>
            <person name="Clifton S.W."/>
            <person name="Latreille P."/>
            <person name="Porwollik S."/>
            <person name="Sabo A."/>
            <person name="Meyer R."/>
            <person name="Bieri T."/>
            <person name="Ozersky P."/>
            <person name="McLellan M."/>
            <person name="Harkins C.R."/>
            <person name="Wang C."/>
            <person name="Nguyen C."/>
            <person name="Berghoff A."/>
            <person name="Elliott G."/>
            <person name="Kohlberg S."/>
            <person name="Strong C."/>
            <person name="Du F."/>
            <person name="Carter J."/>
            <person name="Kremizki C."/>
            <person name="Layman D."/>
            <person name="Leonard S."/>
            <person name="Sun H."/>
            <person name="Fulton L."/>
            <person name="Nash W."/>
            <person name="Miner T."/>
            <person name="Minx P."/>
            <person name="Delehaunty K."/>
            <person name="Fronick C."/>
            <person name="Magrini V."/>
            <person name="Nhan M."/>
            <person name="Warren W."/>
            <person name="Florea L."/>
            <person name="Spieth J."/>
            <person name="Wilson R.K."/>
        </authorList>
    </citation>
    <scope>NUCLEOTIDE SEQUENCE [LARGE SCALE GENOMIC DNA]</scope>
    <source>
        <strain>ATCC 9150 / SARB42</strain>
    </source>
</reference>
<evidence type="ECO:0000255" key="1">
    <source>
        <dbReference type="HAMAP-Rule" id="MF_00652"/>
    </source>
</evidence>
<name>YAAA_SALPA</name>
<proteinExistence type="inferred from homology"/>
<gene>
    <name evidence="1" type="primary">yaaA</name>
    <name type="ordered locus">SPA0005</name>
</gene>
<dbReference type="EMBL" id="CP000026">
    <property type="protein sequence ID" value="AAV76044.1"/>
    <property type="molecule type" value="Genomic_DNA"/>
</dbReference>
<dbReference type="RefSeq" id="WP_000906175.1">
    <property type="nucleotide sequence ID" value="NC_006511.1"/>
</dbReference>
<dbReference type="SMR" id="Q5PDM7"/>
<dbReference type="KEGG" id="spt:SPA0005"/>
<dbReference type="HOGENOM" id="CLU_061989_0_0_6"/>
<dbReference type="Proteomes" id="UP000008185">
    <property type="component" value="Chromosome"/>
</dbReference>
<dbReference type="GO" id="GO:0005829">
    <property type="term" value="C:cytosol"/>
    <property type="evidence" value="ECO:0007669"/>
    <property type="project" value="TreeGrafter"/>
</dbReference>
<dbReference type="GO" id="GO:0033194">
    <property type="term" value="P:response to hydroperoxide"/>
    <property type="evidence" value="ECO:0007669"/>
    <property type="project" value="TreeGrafter"/>
</dbReference>
<dbReference type="HAMAP" id="MF_00652">
    <property type="entry name" value="UPF0246"/>
    <property type="match status" value="1"/>
</dbReference>
<dbReference type="InterPro" id="IPR005583">
    <property type="entry name" value="YaaA"/>
</dbReference>
<dbReference type="NCBIfam" id="NF002541">
    <property type="entry name" value="PRK02101.1-1"/>
    <property type="match status" value="1"/>
</dbReference>
<dbReference type="NCBIfam" id="NF002542">
    <property type="entry name" value="PRK02101.1-3"/>
    <property type="match status" value="1"/>
</dbReference>
<dbReference type="PANTHER" id="PTHR30283:SF4">
    <property type="entry name" value="PEROXIDE STRESS RESISTANCE PROTEIN YAAA"/>
    <property type="match status" value="1"/>
</dbReference>
<dbReference type="PANTHER" id="PTHR30283">
    <property type="entry name" value="PEROXIDE STRESS RESPONSE PROTEIN YAAA"/>
    <property type="match status" value="1"/>
</dbReference>
<dbReference type="Pfam" id="PF03883">
    <property type="entry name" value="H2O2_YaaD"/>
    <property type="match status" value="1"/>
</dbReference>
<accession>Q5PDM7</accession>
<organism>
    <name type="scientific">Salmonella paratyphi A (strain ATCC 9150 / SARB42)</name>
    <dbReference type="NCBI Taxonomy" id="295319"/>
    <lineage>
        <taxon>Bacteria</taxon>
        <taxon>Pseudomonadati</taxon>
        <taxon>Pseudomonadota</taxon>
        <taxon>Gammaproteobacteria</taxon>
        <taxon>Enterobacterales</taxon>
        <taxon>Enterobacteriaceae</taxon>
        <taxon>Salmonella</taxon>
    </lineage>
</organism>
<sequence length="257" mass="29764">MLILISPAKTLDYQSPLATTRYTQPELLDHSQQLIQQARQLSAPQISRLMGISDKLADLNATRFHDWQPHFTPDNARQAILAFKGDVYTGLQAETFNDADFDFAQQHLRMLSGLYGVLRPLDLMQPYRLEMGIRLENPRGKDLYQFWGDIITDKLNEALEAQGDRVVVNLASEEYFKSVKPKKLNAELIKPVFLDEKNGKFKVVSFYAKKARGLMSRFIIENRLTKPEQLTAFDREGYFFDEETSTQDELVFKRYEQ</sequence>